<name>PGK2_MACFA</name>
<accession>Q4R3K4</accession>
<dbReference type="EC" id="2.7.2.3" evidence="3"/>
<dbReference type="EMBL" id="AB179262">
    <property type="protein sequence ID" value="BAE02313.1"/>
    <property type="molecule type" value="mRNA"/>
</dbReference>
<dbReference type="RefSeq" id="NP_001272227.1">
    <property type="nucleotide sequence ID" value="NM_001285298.1"/>
</dbReference>
<dbReference type="RefSeq" id="XP_045246346.1">
    <property type="nucleotide sequence ID" value="XM_045390411.2"/>
</dbReference>
<dbReference type="SMR" id="Q4R3K4"/>
<dbReference type="STRING" id="9541.ENSMFAP00000010531"/>
<dbReference type="Ensembl" id="ENSMFAT00000041199.2">
    <property type="protein sequence ID" value="ENSMFAP00000010531.1"/>
    <property type="gene ID" value="ENSMFAG00000007944.2"/>
</dbReference>
<dbReference type="GeneID" id="101866226"/>
<dbReference type="VEuPathDB" id="HostDB:ENSMFAG00000007944"/>
<dbReference type="eggNOG" id="KOG1367">
    <property type="taxonomic scope" value="Eukaryota"/>
</dbReference>
<dbReference type="GeneTree" id="ENSGT00390000008820"/>
<dbReference type="OMA" id="GPETNKK"/>
<dbReference type="UniPathway" id="UPA00109">
    <property type="reaction ID" value="UER00185"/>
</dbReference>
<dbReference type="Proteomes" id="UP000233100">
    <property type="component" value="Chromosome 4"/>
</dbReference>
<dbReference type="Bgee" id="ENSMFAG00000007944">
    <property type="expression patterns" value="Expressed in multicellular organism"/>
</dbReference>
<dbReference type="GO" id="GO:0005829">
    <property type="term" value="C:cytosol"/>
    <property type="evidence" value="ECO:0007669"/>
    <property type="project" value="TreeGrafter"/>
</dbReference>
<dbReference type="GO" id="GO:0070062">
    <property type="term" value="C:extracellular exosome"/>
    <property type="evidence" value="ECO:0007669"/>
    <property type="project" value="TreeGrafter"/>
</dbReference>
<dbReference type="GO" id="GO:0035686">
    <property type="term" value="C:sperm fibrous sheath"/>
    <property type="evidence" value="ECO:0007669"/>
    <property type="project" value="TreeGrafter"/>
</dbReference>
<dbReference type="GO" id="GO:0043531">
    <property type="term" value="F:ADP binding"/>
    <property type="evidence" value="ECO:0007669"/>
    <property type="project" value="TreeGrafter"/>
</dbReference>
<dbReference type="GO" id="GO:0005524">
    <property type="term" value="F:ATP binding"/>
    <property type="evidence" value="ECO:0007669"/>
    <property type="project" value="UniProtKB-KW"/>
</dbReference>
<dbReference type="GO" id="GO:0046872">
    <property type="term" value="F:metal ion binding"/>
    <property type="evidence" value="ECO:0007669"/>
    <property type="project" value="UniProtKB-KW"/>
</dbReference>
<dbReference type="GO" id="GO:0004618">
    <property type="term" value="F:phosphoglycerate kinase activity"/>
    <property type="evidence" value="ECO:0007669"/>
    <property type="project" value="UniProtKB-EC"/>
</dbReference>
<dbReference type="GO" id="GO:0006094">
    <property type="term" value="P:gluconeogenesis"/>
    <property type="evidence" value="ECO:0007669"/>
    <property type="project" value="TreeGrafter"/>
</dbReference>
<dbReference type="GO" id="GO:0006096">
    <property type="term" value="P:glycolytic process"/>
    <property type="evidence" value="ECO:0007669"/>
    <property type="project" value="UniProtKB-UniPathway"/>
</dbReference>
<dbReference type="CDD" id="cd00318">
    <property type="entry name" value="Phosphoglycerate_kinase"/>
    <property type="match status" value="1"/>
</dbReference>
<dbReference type="FunFam" id="3.40.50.1260:FF:000019">
    <property type="entry name" value="Phosphoglycerate kinase 1"/>
    <property type="match status" value="1"/>
</dbReference>
<dbReference type="FunFam" id="3.40.50.1260:FF:000031">
    <property type="entry name" value="Phosphoglycerate kinase 1"/>
    <property type="match status" value="1"/>
</dbReference>
<dbReference type="Gene3D" id="3.40.50.1260">
    <property type="entry name" value="Phosphoglycerate kinase, N-terminal domain"/>
    <property type="match status" value="3"/>
</dbReference>
<dbReference type="HAMAP" id="MF_00145">
    <property type="entry name" value="Phosphoglyc_kinase"/>
    <property type="match status" value="1"/>
</dbReference>
<dbReference type="InterPro" id="IPR001576">
    <property type="entry name" value="Phosphoglycerate_kinase"/>
</dbReference>
<dbReference type="InterPro" id="IPR015911">
    <property type="entry name" value="Phosphoglycerate_kinase_CS"/>
</dbReference>
<dbReference type="InterPro" id="IPR015824">
    <property type="entry name" value="Phosphoglycerate_kinase_N"/>
</dbReference>
<dbReference type="InterPro" id="IPR036043">
    <property type="entry name" value="Phosphoglycerate_kinase_sf"/>
</dbReference>
<dbReference type="PANTHER" id="PTHR11406">
    <property type="entry name" value="PHOSPHOGLYCERATE KINASE"/>
    <property type="match status" value="1"/>
</dbReference>
<dbReference type="PANTHER" id="PTHR11406:SF10">
    <property type="entry name" value="PHOSPHOGLYCERATE KINASE 2"/>
    <property type="match status" value="1"/>
</dbReference>
<dbReference type="Pfam" id="PF00162">
    <property type="entry name" value="PGK"/>
    <property type="match status" value="1"/>
</dbReference>
<dbReference type="PIRSF" id="PIRSF000724">
    <property type="entry name" value="Pgk"/>
    <property type="match status" value="1"/>
</dbReference>
<dbReference type="PRINTS" id="PR00477">
    <property type="entry name" value="PHGLYCKINASE"/>
</dbReference>
<dbReference type="SUPFAM" id="SSF53748">
    <property type="entry name" value="Phosphoglycerate kinase"/>
    <property type="match status" value="1"/>
</dbReference>
<dbReference type="PROSITE" id="PS00111">
    <property type="entry name" value="PGLYCERATE_KINASE"/>
    <property type="match status" value="1"/>
</dbReference>
<reference key="1">
    <citation type="submission" date="2005-06" db="EMBL/GenBank/DDBJ databases">
        <title>DNA sequences of macaque genes expressed in brain or testis and its evolutionary implications.</title>
        <authorList>
            <consortium name="International consortium for macaque cDNA sequencing and analysis"/>
        </authorList>
    </citation>
    <scope>NUCLEOTIDE SEQUENCE [LARGE SCALE MRNA]</scope>
    <source>
        <tissue>Testis</tissue>
    </source>
</reference>
<evidence type="ECO:0000250" key="1"/>
<evidence type="ECO:0000250" key="2">
    <source>
        <dbReference type="UniProtKB" id="P00558"/>
    </source>
</evidence>
<evidence type="ECO:0000250" key="3">
    <source>
        <dbReference type="UniProtKB" id="P09041"/>
    </source>
</evidence>
<evidence type="ECO:0000250" key="4">
    <source>
        <dbReference type="UniProtKB" id="Q7SIB7"/>
    </source>
</evidence>
<evidence type="ECO:0000305" key="5"/>
<proteinExistence type="evidence at transcript level"/>
<feature type="initiator methionine" description="Removed" evidence="2">
    <location>
        <position position="1"/>
    </location>
</feature>
<feature type="chain" id="PRO_0000288667" description="Phosphoglycerate kinase 2">
    <location>
        <begin position="2"/>
        <end position="417"/>
    </location>
</feature>
<feature type="binding site" evidence="2">
    <location>
        <position position="23"/>
    </location>
    <ligand>
        <name>(2R)-3-phosphoglycerate</name>
        <dbReference type="ChEBI" id="CHEBI:58272"/>
    </ligand>
</feature>
<feature type="binding site" evidence="3">
    <location>
        <position position="24"/>
    </location>
    <ligand>
        <name>(2R)-3-phosphoglycerate</name>
        <dbReference type="ChEBI" id="CHEBI:58272"/>
    </ligand>
</feature>
<feature type="binding site" evidence="2">
    <location>
        <position position="25"/>
    </location>
    <ligand>
        <name>(2R)-3-phosphoglycerate</name>
        <dbReference type="ChEBI" id="CHEBI:58272"/>
    </ligand>
</feature>
<feature type="binding site" evidence="3">
    <location>
        <position position="26"/>
    </location>
    <ligand>
        <name>(2R)-3-phosphoglycerate</name>
        <dbReference type="ChEBI" id="CHEBI:58272"/>
    </ligand>
</feature>
<feature type="binding site" evidence="2">
    <location>
        <position position="38"/>
    </location>
    <ligand>
        <name>(2R)-3-phosphoglycerate</name>
        <dbReference type="ChEBI" id="CHEBI:58272"/>
    </ligand>
</feature>
<feature type="binding site" evidence="3">
    <location>
        <position position="39"/>
    </location>
    <ligand>
        <name>(2R)-3-phosphoglycerate</name>
        <dbReference type="ChEBI" id="CHEBI:58272"/>
    </ligand>
</feature>
<feature type="binding site" evidence="2">
    <location>
        <position position="62"/>
    </location>
    <ligand>
        <name>(2R)-3-phosphoglycerate</name>
        <dbReference type="ChEBI" id="CHEBI:58272"/>
    </ligand>
</feature>
<feature type="binding site" evidence="3">
    <location>
        <position position="63"/>
    </location>
    <ligand>
        <name>(2R)-3-phosphoglycerate</name>
        <dbReference type="ChEBI" id="CHEBI:58272"/>
    </ligand>
</feature>
<feature type="binding site" evidence="2">
    <location>
        <position position="65"/>
    </location>
    <ligand>
        <name>(2R)-3-phosphoglycerate</name>
        <dbReference type="ChEBI" id="CHEBI:58272"/>
    </ligand>
</feature>
<feature type="binding site" evidence="3">
    <location>
        <position position="66"/>
    </location>
    <ligand>
        <name>(2R)-3-phosphoglycerate</name>
        <dbReference type="ChEBI" id="CHEBI:58272"/>
    </ligand>
</feature>
<feature type="binding site" evidence="2">
    <location>
        <position position="122"/>
    </location>
    <ligand>
        <name>(2R)-3-phosphoglycerate</name>
        <dbReference type="ChEBI" id="CHEBI:58272"/>
    </ligand>
</feature>
<feature type="binding site" evidence="3">
    <location>
        <position position="123"/>
    </location>
    <ligand>
        <name>(2R)-3-phosphoglycerate</name>
        <dbReference type="ChEBI" id="CHEBI:58272"/>
    </ligand>
</feature>
<feature type="binding site" evidence="2">
    <location>
        <position position="170"/>
    </location>
    <ligand>
        <name>(2R)-3-phosphoglycerate</name>
        <dbReference type="ChEBI" id="CHEBI:58272"/>
    </ligand>
</feature>
<feature type="binding site" evidence="3">
    <location>
        <position position="171"/>
    </location>
    <ligand>
        <name>(2R)-3-phosphoglycerate</name>
        <dbReference type="ChEBI" id="CHEBI:58272"/>
    </ligand>
</feature>
<feature type="binding site" evidence="2">
    <location>
        <position position="214"/>
    </location>
    <ligand>
        <name>ADP</name>
        <dbReference type="ChEBI" id="CHEBI:456216"/>
    </ligand>
</feature>
<feature type="binding site" evidence="2">
    <location>
        <position position="214"/>
    </location>
    <ligand>
        <name>CDP</name>
        <dbReference type="ChEBI" id="CHEBI:58069"/>
    </ligand>
</feature>
<feature type="binding site" evidence="4">
    <location>
        <position position="215"/>
    </location>
    <ligand>
        <name>AMP</name>
        <dbReference type="ChEBI" id="CHEBI:456215"/>
    </ligand>
</feature>
<feature type="binding site" evidence="3">
    <location>
        <position position="215"/>
    </location>
    <ligand>
        <name>ATP</name>
        <dbReference type="ChEBI" id="CHEBI:30616"/>
    </ligand>
</feature>
<feature type="binding site" evidence="2">
    <location>
        <position position="215"/>
    </location>
    <ligand>
        <name>Mg(2+)</name>
        <dbReference type="ChEBI" id="CHEBI:18420"/>
    </ligand>
</feature>
<feature type="binding site" evidence="4">
    <location>
        <position position="216"/>
    </location>
    <ligand>
        <name>AMP</name>
        <dbReference type="ChEBI" id="CHEBI:456215"/>
    </ligand>
</feature>
<feature type="binding site" evidence="2">
    <location>
        <position position="218"/>
    </location>
    <ligand>
        <name>Mg(2+)</name>
        <dbReference type="ChEBI" id="CHEBI:18420"/>
    </ligand>
</feature>
<feature type="binding site" evidence="2">
    <location>
        <position position="219"/>
    </location>
    <ligand>
        <name>CDP</name>
        <dbReference type="ChEBI" id="CHEBI:58069"/>
    </ligand>
</feature>
<feature type="binding site" evidence="2">
    <location>
        <position position="219"/>
    </location>
    <ligand>
        <name>Mg(2+)</name>
        <dbReference type="ChEBI" id="CHEBI:18420"/>
    </ligand>
</feature>
<feature type="binding site" evidence="4">
    <location>
        <position position="220"/>
    </location>
    <ligand>
        <name>AMP</name>
        <dbReference type="ChEBI" id="CHEBI:456215"/>
    </ligand>
</feature>
<feature type="binding site" evidence="3">
    <location>
        <position position="220"/>
    </location>
    <ligand>
        <name>ATP</name>
        <dbReference type="ChEBI" id="CHEBI:30616"/>
    </ligand>
</feature>
<feature type="binding site" evidence="2">
    <location>
        <position position="238"/>
    </location>
    <ligand>
        <name>ADP</name>
        <dbReference type="ChEBI" id="CHEBI:456216"/>
    </ligand>
</feature>
<feature type="binding site" evidence="2">
    <location>
        <position position="238"/>
    </location>
    <ligand>
        <name>CDP</name>
        <dbReference type="ChEBI" id="CHEBI:58069"/>
    </ligand>
</feature>
<feature type="binding site" evidence="4">
    <location>
        <position position="239"/>
    </location>
    <ligand>
        <name>AMP</name>
        <dbReference type="ChEBI" id="CHEBI:456215"/>
    </ligand>
</feature>
<feature type="binding site" evidence="3">
    <location>
        <position position="239"/>
    </location>
    <ligand>
        <name>ATP</name>
        <dbReference type="ChEBI" id="CHEBI:30616"/>
    </ligand>
</feature>
<feature type="binding site" evidence="4">
    <location>
        <position position="313"/>
    </location>
    <ligand>
        <name>AMP</name>
        <dbReference type="ChEBI" id="CHEBI:456215"/>
    </ligand>
</feature>
<feature type="binding site" evidence="3">
    <location>
        <position position="313"/>
    </location>
    <ligand>
        <name>ATP</name>
        <dbReference type="ChEBI" id="CHEBI:30616"/>
    </ligand>
</feature>
<feature type="binding site" evidence="2">
    <location>
        <position position="338"/>
    </location>
    <ligand>
        <name>CDP</name>
        <dbReference type="ChEBI" id="CHEBI:58069"/>
    </ligand>
</feature>
<feature type="binding site" evidence="2">
    <location>
        <position position="343"/>
    </location>
    <ligand>
        <name>ADP</name>
        <dbReference type="ChEBI" id="CHEBI:456216"/>
    </ligand>
</feature>
<feature type="binding site" evidence="2">
    <location>
        <position position="343"/>
    </location>
    <ligand>
        <name>CDP</name>
        <dbReference type="ChEBI" id="CHEBI:58069"/>
    </ligand>
</feature>
<feature type="binding site" evidence="4">
    <location>
        <position position="344"/>
    </location>
    <ligand>
        <name>AMP</name>
        <dbReference type="ChEBI" id="CHEBI:456215"/>
    </ligand>
</feature>
<feature type="binding site" evidence="3">
    <location>
        <position position="344"/>
    </location>
    <ligand>
        <name>ATP</name>
        <dbReference type="ChEBI" id="CHEBI:30616"/>
    </ligand>
</feature>
<feature type="binding site" evidence="3">
    <location>
        <position position="375"/>
    </location>
    <ligand>
        <name>ATP</name>
        <dbReference type="ChEBI" id="CHEBI:30616"/>
    </ligand>
</feature>
<feature type="binding site" evidence="4">
    <location>
        <position position="375"/>
    </location>
    <ligand>
        <name>Mg(2+)</name>
        <dbReference type="ChEBI" id="CHEBI:18420"/>
    </ligand>
</feature>
<feature type="binding site" evidence="4">
    <location>
        <position position="376"/>
    </location>
    <ligand>
        <name>ATP</name>
        <dbReference type="ChEBI" id="CHEBI:30616"/>
    </ligand>
</feature>
<feature type="modified residue" description="N-acetylserine" evidence="2">
    <location>
        <position position="2"/>
    </location>
</feature>
<feature type="modified residue" description="Phosphoserine" evidence="2">
    <location>
        <position position="2"/>
    </location>
</feature>
<feature type="modified residue" description="Phosphoserine" evidence="2">
    <location>
        <position position="4"/>
    </location>
</feature>
<feature type="modified residue" description="N6-acetyllysine" evidence="2">
    <location>
        <position position="11"/>
    </location>
</feature>
<feature type="modified residue" description="N6-acetyllysine" evidence="2">
    <location>
        <position position="48"/>
    </location>
</feature>
<feature type="modified residue" description="N6-acetyllysine" evidence="2">
    <location>
        <position position="75"/>
    </location>
</feature>
<feature type="modified residue" description="N6-acetyllysine" evidence="2">
    <location>
        <position position="86"/>
    </location>
</feature>
<feature type="modified residue" description="N6-acetyllysine" evidence="2">
    <location>
        <position position="97"/>
    </location>
</feature>
<feature type="modified residue" description="N6-acetyllysine" evidence="2">
    <location>
        <position position="131"/>
    </location>
</feature>
<feature type="modified residue" description="N6-acetyllysine" evidence="2">
    <location>
        <position position="146"/>
    </location>
</feature>
<feature type="modified residue" description="Phosphotyrosine" evidence="2">
    <location>
        <position position="196"/>
    </location>
</feature>
<feature type="modified residue" description="N6-acetyllysine" evidence="2">
    <location>
        <position position="199"/>
    </location>
</feature>
<feature type="modified residue" description="N6-acetyllysine" evidence="2">
    <location>
        <position position="267"/>
    </location>
</feature>
<feature type="modified residue" description="N6-acetyllysine" evidence="2">
    <location>
        <position position="291"/>
    </location>
</feature>
<keyword id="KW-0007">Acetylation</keyword>
<keyword id="KW-0067">ATP-binding</keyword>
<keyword id="KW-0963">Cytoplasm</keyword>
<keyword id="KW-0324">Glycolysis</keyword>
<keyword id="KW-0418">Kinase</keyword>
<keyword id="KW-0460">Magnesium</keyword>
<keyword id="KW-0479">Metal-binding</keyword>
<keyword id="KW-0547">Nucleotide-binding</keyword>
<keyword id="KW-0597">Phosphoprotein</keyword>
<keyword id="KW-1185">Reference proteome</keyword>
<keyword id="KW-0808">Transferase</keyword>
<comment type="function">
    <text evidence="3">Essential for sperm motility and male fertility but is not required for the completion of spermatogenesis.</text>
</comment>
<comment type="catalytic activity">
    <reaction evidence="3">
        <text>(2R)-3-phosphoglycerate + ATP = (2R)-3-phospho-glyceroyl phosphate + ADP</text>
        <dbReference type="Rhea" id="RHEA:14801"/>
        <dbReference type="ChEBI" id="CHEBI:30616"/>
        <dbReference type="ChEBI" id="CHEBI:57604"/>
        <dbReference type="ChEBI" id="CHEBI:58272"/>
        <dbReference type="ChEBI" id="CHEBI:456216"/>
        <dbReference type="EC" id="2.7.2.3"/>
    </reaction>
</comment>
<comment type="cofactor">
    <cofactor evidence="2">
        <name>Mg(2+)</name>
        <dbReference type="ChEBI" id="CHEBI:18420"/>
    </cofactor>
</comment>
<comment type="pathway">
    <text>Carbohydrate degradation; glycolysis; pyruvate from D-glyceraldehyde 3-phosphate: step 2/5.</text>
</comment>
<comment type="subunit">
    <text evidence="3">Monomer.</text>
</comment>
<comment type="subcellular location">
    <subcellularLocation>
        <location evidence="1">Cytoplasm</location>
    </subcellularLocation>
</comment>
<comment type="similarity">
    <text evidence="5">Belongs to the phosphoglycerate kinase family.</text>
</comment>
<sequence>MSLSKKLTLDKLDVRGKRVIMRVDFNVPMKKNQITNNQRIKASIPSIKYCLDNGAKAVVLMSHLGRPDGVPMPDKYSLQPVAAELKSLLGKDVLFLKDCVGAEVENACANPAPGSVILLENLRFHVEEEGKGQDPSGKKIKAEPDKIEGFRASLSKLGDVYVNDAFGTAHRAHSSMVGVNLPHKASGFLMKKELDYFAKALENPVRPFLAILGGAKVADKIQLIKNMLDKVNEMIIGGGMAYTFLKVLNNMEIGASLFDEEGAKIVKDIMTKAQKNGVRITFPVDFVTADKFDENAQVGKATVASGIPPGWMGLDCGPESNKNHAQVVAQARLIVWNGPLGVFEWDAFAKGTKALMDEIVKATSKGCITIIGGGDTATCCAKWNTEDKVSHVSTGGGASLELLEGKILPGVEALSNM</sequence>
<gene>
    <name type="primary">PGK2</name>
    <name type="ORF">QtsA-16404</name>
</gene>
<protein>
    <recommendedName>
        <fullName>Phosphoglycerate kinase 2</fullName>
        <ecNumber evidence="3">2.7.2.3</ecNumber>
    </recommendedName>
</protein>
<organism>
    <name type="scientific">Macaca fascicularis</name>
    <name type="common">Crab-eating macaque</name>
    <name type="synonym">Cynomolgus monkey</name>
    <dbReference type="NCBI Taxonomy" id="9541"/>
    <lineage>
        <taxon>Eukaryota</taxon>
        <taxon>Metazoa</taxon>
        <taxon>Chordata</taxon>
        <taxon>Craniata</taxon>
        <taxon>Vertebrata</taxon>
        <taxon>Euteleostomi</taxon>
        <taxon>Mammalia</taxon>
        <taxon>Eutheria</taxon>
        <taxon>Euarchontoglires</taxon>
        <taxon>Primates</taxon>
        <taxon>Haplorrhini</taxon>
        <taxon>Catarrhini</taxon>
        <taxon>Cercopithecidae</taxon>
        <taxon>Cercopithecinae</taxon>
        <taxon>Macaca</taxon>
    </lineage>
</organism>